<gene>
    <name evidence="1" type="primary">htpG</name>
    <name type="ordered locus">YPN_0970</name>
    <name type="ORF">YP516_1052</name>
</gene>
<keyword id="KW-0067">ATP-binding</keyword>
<keyword id="KW-0143">Chaperone</keyword>
<keyword id="KW-0963">Cytoplasm</keyword>
<keyword id="KW-0547">Nucleotide-binding</keyword>
<keyword id="KW-0346">Stress response</keyword>
<organism>
    <name type="scientific">Yersinia pestis bv. Antiqua (strain Nepal516)</name>
    <dbReference type="NCBI Taxonomy" id="377628"/>
    <lineage>
        <taxon>Bacteria</taxon>
        <taxon>Pseudomonadati</taxon>
        <taxon>Pseudomonadota</taxon>
        <taxon>Gammaproteobacteria</taxon>
        <taxon>Enterobacterales</taxon>
        <taxon>Yersiniaceae</taxon>
        <taxon>Yersinia</taxon>
    </lineage>
</organism>
<feature type="chain" id="PRO_0000258529" description="Chaperone protein HtpG">
    <location>
        <begin position="1"/>
        <end position="624"/>
    </location>
</feature>
<feature type="region of interest" description="A; substrate-binding" evidence="1">
    <location>
        <begin position="1"/>
        <end position="336"/>
    </location>
</feature>
<feature type="region of interest" description="B" evidence="1">
    <location>
        <begin position="337"/>
        <end position="552"/>
    </location>
</feature>
<feature type="region of interest" description="C" evidence="1">
    <location>
        <begin position="553"/>
        <end position="624"/>
    </location>
</feature>
<proteinExistence type="inferred from homology"/>
<dbReference type="EMBL" id="CP000305">
    <property type="protein sequence ID" value="ABG17302.1"/>
    <property type="molecule type" value="Genomic_DNA"/>
</dbReference>
<dbReference type="EMBL" id="ACNQ01000008">
    <property type="protein sequence ID" value="EEO77390.1"/>
    <property type="molecule type" value="Genomic_DNA"/>
</dbReference>
<dbReference type="SMR" id="Q1CL28"/>
<dbReference type="KEGG" id="ypn:YPN_0970"/>
<dbReference type="HOGENOM" id="CLU_006684_3_0_6"/>
<dbReference type="Proteomes" id="UP000008936">
    <property type="component" value="Chromosome"/>
</dbReference>
<dbReference type="GO" id="GO:0005737">
    <property type="term" value="C:cytoplasm"/>
    <property type="evidence" value="ECO:0007669"/>
    <property type="project" value="UniProtKB-SubCell"/>
</dbReference>
<dbReference type="GO" id="GO:0005524">
    <property type="term" value="F:ATP binding"/>
    <property type="evidence" value="ECO:0007669"/>
    <property type="project" value="UniProtKB-UniRule"/>
</dbReference>
<dbReference type="GO" id="GO:0016887">
    <property type="term" value="F:ATP hydrolysis activity"/>
    <property type="evidence" value="ECO:0007669"/>
    <property type="project" value="InterPro"/>
</dbReference>
<dbReference type="GO" id="GO:0140662">
    <property type="term" value="F:ATP-dependent protein folding chaperone"/>
    <property type="evidence" value="ECO:0007669"/>
    <property type="project" value="InterPro"/>
</dbReference>
<dbReference type="GO" id="GO:0051082">
    <property type="term" value="F:unfolded protein binding"/>
    <property type="evidence" value="ECO:0007669"/>
    <property type="project" value="UniProtKB-UniRule"/>
</dbReference>
<dbReference type="CDD" id="cd16927">
    <property type="entry name" value="HATPase_Hsp90-like"/>
    <property type="match status" value="1"/>
</dbReference>
<dbReference type="FunFam" id="1.20.120.790:FF:000002">
    <property type="entry name" value="Molecular chaperone HtpG"/>
    <property type="match status" value="1"/>
</dbReference>
<dbReference type="FunFam" id="3.30.230.80:FF:000002">
    <property type="entry name" value="Molecular chaperone HtpG"/>
    <property type="match status" value="1"/>
</dbReference>
<dbReference type="FunFam" id="3.30.565.10:FF:000009">
    <property type="entry name" value="Molecular chaperone HtpG"/>
    <property type="match status" value="1"/>
</dbReference>
<dbReference type="FunFam" id="3.40.50.11260:FF:000002">
    <property type="entry name" value="Molecular chaperone HtpG"/>
    <property type="match status" value="1"/>
</dbReference>
<dbReference type="Gene3D" id="3.30.230.80">
    <property type="match status" value="1"/>
</dbReference>
<dbReference type="Gene3D" id="3.40.50.11260">
    <property type="match status" value="1"/>
</dbReference>
<dbReference type="Gene3D" id="1.20.120.790">
    <property type="entry name" value="Heat shock protein 90, C-terminal domain"/>
    <property type="match status" value="1"/>
</dbReference>
<dbReference type="Gene3D" id="3.30.565.10">
    <property type="entry name" value="Histidine kinase-like ATPase, C-terminal domain"/>
    <property type="match status" value="1"/>
</dbReference>
<dbReference type="HAMAP" id="MF_00505">
    <property type="entry name" value="HSP90"/>
    <property type="match status" value="1"/>
</dbReference>
<dbReference type="InterPro" id="IPR036890">
    <property type="entry name" value="HATPase_C_sf"/>
</dbReference>
<dbReference type="InterPro" id="IPR019805">
    <property type="entry name" value="Heat_shock_protein_90_CS"/>
</dbReference>
<dbReference type="InterPro" id="IPR037196">
    <property type="entry name" value="HSP90_C"/>
</dbReference>
<dbReference type="InterPro" id="IPR001404">
    <property type="entry name" value="Hsp90_fam"/>
</dbReference>
<dbReference type="InterPro" id="IPR020575">
    <property type="entry name" value="Hsp90_N"/>
</dbReference>
<dbReference type="InterPro" id="IPR020568">
    <property type="entry name" value="Ribosomal_Su5_D2-typ_SF"/>
</dbReference>
<dbReference type="NCBIfam" id="NF003555">
    <property type="entry name" value="PRK05218.1"/>
    <property type="match status" value="1"/>
</dbReference>
<dbReference type="PANTHER" id="PTHR11528">
    <property type="entry name" value="HEAT SHOCK PROTEIN 90 FAMILY MEMBER"/>
    <property type="match status" value="1"/>
</dbReference>
<dbReference type="Pfam" id="PF13589">
    <property type="entry name" value="HATPase_c_3"/>
    <property type="match status" value="1"/>
</dbReference>
<dbReference type="Pfam" id="PF00183">
    <property type="entry name" value="HSP90"/>
    <property type="match status" value="1"/>
</dbReference>
<dbReference type="PIRSF" id="PIRSF002583">
    <property type="entry name" value="Hsp90"/>
    <property type="match status" value="1"/>
</dbReference>
<dbReference type="PRINTS" id="PR00775">
    <property type="entry name" value="HEATSHOCK90"/>
</dbReference>
<dbReference type="SMART" id="SM00387">
    <property type="entry name" value="HATPase_c"/>
    <property type="match status" value="1"/>
</dbReference>
<dbReference type="SUPFAM" id="SSF55874">
    <property type="entry name" value="ATPase domain of HSP90 chaperone/DNA topoisomerase II/histidine kinase"/>
    <property type="match status" value="1"/>
</dbReference>
<dbReference type="SUPFAM" id="SSF110942">
    <property type="entry name" value="HSP90 C-terminal domain"/>
    <property type="match status" value="1"/>
</dbReference>
<dbReference type="SUPFAM" id="SSF54211">
    <property type="entry name" value="Ribosomal protein S5 domain 2-like"/>
    <property type="match status" value="1"/>
</dbReference>
<dbReference type="PROSITE" id="PS00298">
    <property type="entry name" value="HSP90"/>
    <property type="match status" value="1"/>
</dbReference>
<name>HTPG_YERPN</name>
<reference key="1">
    <citation type="journal article" date="2006" name="J. Bacteriol.">
        <title>Complete genome sequence of Yersinia pestis strains Antiqua and Nepal516: evidence of gene reduction in an emerging pathogen.</title>
        <authorList>
            <person name="Chain P.S.G."/>
            <person name="Hu P."/>
            <person name="Malfatti S.A."/>
            <person name="Radnedge L."/>
            <person name="Larimer F."/>
            <person name="Vergez L.M."/>
            <person name="Worsham P."/>
            <person name="Chu M.C."/>
            <person name="Andersen G.L."/>
        </authorList>
    </citation>
    <scope>NUCLEOTIDE SEQUENCE [LARGE SCALE GENOMIC DNA]</scope>
    <source>
        <strain>Nepal516</strain>
    </source>
</reference>
<reference key="2">
    <citation type="submission" date="2009-04" db="EMBL/GenBank/DDBJ databases">
        <title>Yersinia pestis Nepal516A whole genome shotgun sequencing project.</title>
        <authorList>
            <person name="Plunkett G. III"/>
            <person name="Anderson B.D."/>
            <person name="Baumler D.J."/>
            <person name="Burland V."/>
            <person name="Cabot E.L."/>
            <person name="Glasner J.D."/>
            <person name="Mau B."/>
            <person name="Neeno-Eckwall E."/>
            <person name="Perna N.T."/>
            <person name="Munk A.C."/>
            <person name="Tapia R."/>
            <person name="Green L.D."/>
            <person name="Rogers Y.C."/>
            <person name="Detter J.C."/>
            <person name="Bruce D.C."/>
            <person name="Brettin T.S."/>
        </authorList>
    </citation>
    <scope>NUCLEOTIDE SEQUENCE [LARGE SCALE GENOMIC DNA]</scope>
    <source>
        <strain>Nepal516</strain>
    </source>
</reference>
<evidence type="ECO:0000255" key="1">
    <source>
        <dbReference type="HAMAP-Rule" id="MF_00505"/>
    </source>
</evidence>
<comment type="function">
    <text evidence="1">Molecular chaperone. Has ATPase activity.</text>
</comment>
<comment type="subunit">
    <text evidence="1">Homodimer.</text>
</comment>
<comment type="subcellular location">
    <subcellularLocation>
        <location evidence="1">Cytoplasm</location>
    </subcellularLocation>
</comment>
<comment type="similarity">
    <text evidence="1">Belongs to the heat shock protein 90 family.</text>
</comment>
<accession>Q1CL28</accession>
<accession>C4GQP9</accession>
<protein>
    <recommendedName>
        <fullName evidence="1">Chaperone protein HtpG</fullName>
    </recommendedName>
    <alternativeName>
        <fullName evidence="1">Heat shock protein HtpG</fullName>
    </alternativeName>
    <alternativeName>
        <fullName evidence="1">High temperature protein G</fullName>
    </alternativeName>
</protein>
<sequence length="624" mass="71031">MNMKGQETRGFQSEVKQLLHLMIHSLYSNKEIFLRELISNASDAADKLRFRALSNPELFEGDGELRVRLSFDKEKRTLTLSDNGIGMTRDEVIDNLGTIAKSGTKAFLESIGSDQAKDSQLIGQFGVGFYSAFIVADKVTVRTRAAGAPADTGVFWESAGEGDYTIADITKDERGTEITLHLREGEDEYLDDWRLRSVISKYSDHIALPVEIQVKNEEDGTVTWEKINKAQALWTRGKAEISDDEYKAFYKHIAHDFTDPLSWSHNRVEGKQEYTSLLYIPAQAPWDMWNRDHKHGLKLYVQRVFIMDEAEQFMPNYLRFVRGLIDSNDLPLNVSREILQDSRITQNLRSALTKRVLQMLEKLAKDDAEKYQQFWQQFGMALKEGPAEDGSNKETIAKLLRFASTHTDSSAQTVSLEDYVSRMAEGQEKIYYITADSYAAAKSSPHLELFRKKGIEVLLLSDRIDEWMMSYLTEFEGKAFQSVSKADDSLNKLADEENPEQQEAEKALEPFVERVKTLLGERVKDVRLTHRLTDTPAIVTTDADEMSTQMAKLFAAAGQQAPEVKYIFELNPDHGLVKRAAEVTDDTQFAQWVELLLDQALLAERGTLEDPNQFIRRMNQLLTA</sequence>